<dbReference type="EMBL" id="CP000950">
    <property type="protein sequence ID" value="ACA69252.1"/>
    <property type="molecule type" value="Genomic_DNA"/>
</dbReference>
<dbReference type="RefSeq" id="WP_002210716.1">
    <property type="nucleotide sequence ID" value="NZ_CP009792.1"/>
</dbReference>
<dbReference type="SMR" id="B1JG69"/>
<dbReference type="KEGG" id="ypy:YPK_2978"/>
<dbReference type="PATRIC" id="fig|502800.11.peg.3699"/>
<dbReference type="Gene3D" id="3.10.20.280">
    <property type="entry name" value="RnfH-like"/>
    <property type="match status" value="1"/>
</dbReference>
<dbReference type="HAMAP" id="MF_00460">
    <property type="entry name" value="UPF0125_RnfH"/>
    <property type="match status" value="1"/>
</dbReference>
<dbReference type="InterPro" id="IPR016155">
    <property type="entry name" value="Mopterin_synth/thiamin_S_b"/>
</dbReference>
<dbReference type="InterPro" id="IPR005346">
    <property type="entry name" value="RnfH"/>
</dbReference>
<dbReference type="InterPro" id="IPR037021">
    <property type="entry name" value="RnfH_sf"/>
</dbReference>
<dbReference type="NCBIfam" id="NF002490">
    <property type="entry name" value="PRK01777.1"/>
    <property type="match status" value="1"/>
</dbReference>
<dbReference type="PANTHER" id="PTHR37483">
    <property type="entry name" value="UPF0125 PROTEIN RATB"/>
    <property type="match status" value="1"/>
</dbReference>
<dbReference type="PANTHER" id="PTHR37483:SF1">
    <property type="entry name" value="UPF0125 PROTEIN RATB"/>
    <property type="match status" value="1"/>
</dbReference>
<dbReference type="Pfam" id="PF03658">
    <property type="entry name" value="Ub-RnfH"/>
    <property type="match status" value="1"/>
</dbReference>
<dbReference type="SUPFAM" id="SSF54285">
    <property type="entry name" value="MoaD/ThiS"/>
    <property type="match status" value="1"/>
</dbReference>
<reference key="1">
    <citation type="submission" date="2008-02" db="EMBL/GenBank/DDBJ databases">
        <title>Complete sequence of Yersinia pseudotuberculosis YPIII.</title>
        <authorList>
            <consortium name="US DOE Joint Genome Institute"/>
            <person name="Copeland A."/>
            <person name="Lucas S."/>
            <person name="Lapidus A."/>
            <person name="Glavina del Rio T."/>
            <person name="Dalin E."/>
            <person name="Tice H."/>
            <person name="Bruce D."/>
            <person name="Goodwin L."/>
            <person name="Pitluck S."/>
            <person name="Munk A.C."/>
            <person name="Brettin T."/>
            <person name="Detter J.C."/>
            <person name="Han C."/>
            <person name="Tapia R."/>
            <person name="Schmutz J."/>
            <person name="Larimer F."/>
            <person name="Land M."/>
            <person name="Hauser L."/>
            <person name="Challacombe J.F."/>
            <person name="Green L."/>
            <person name="Lindler L.E."/>
            <person name="Nikolich M.P."/>
            <person name="Richardson P."/>
        </authorList>
    </citation>
    <scope>NUCLEOTIDE SEQUENCE [LARGE SCALE GENOMIC DNA]</scope>
    <source>
        <strain>YPIII</strain>
    </source>
</reference>
<proteinExistence type="inferred from homology"/>
<gene>
    <name evidence="1" type="primary">rnfH</name>
    <name type="ordered locus">YPK_2978</name>
</gene>
<evidence type="ECO:0000255" key="1">
    <source>
        <dbReference type="HAMAP-Rule" id="MF_00460"/>
    </source>
</evidence>
<feature type="chain" id="PRO_1000200201" description="Protein RnfH">
    <location>
        <begin position="1"/>
        <end position="94"/>
    </location>
</feature>
<sequence>MPDIRVEVVYALSERQYLRTVSLVVGSTVEDAIKASGLLELRPDIDLEKNKVGIYSRPVKLGDKLNDGDRVEIYRPLIADPKELRRQRAEQAKK</sequence>
<name>RNFH_YERPY</name>
<comment type="similarity">
    <text evidence="1">Belongs to the UPF0125 (RnfH) family.</text>
</comment>
<protein>
    <recommendedName>
        <fullName evidence="1">Protein RnfH</fullName>
    </recommendedName>
</protein>
<organism>
    <name type="scientific">Yersinia pseudotuberculosis serotype O:3 (strain YPIII)</name>
    <dbReference type="NCBI Taxonomy" id="502800"/>
    <lineage>
        <taxon>Bacteria</taxon>
        <taxon>Pseudomonadati</taxon>
        <taxon>Pseudomonadota</taxon>
        <taxon>Gammaproteobacteria</taxon>
        <taxon>Enterobacterales</taxon>
        <taxon>Yersiniaceae</taxon>
        <taxon>Yersinia</taxon>
    </lineage>
</organism>
<accession>B1JG69</accession>